<organism>
    <name type="scientific">Brugia malayi</name>
    <name type="common">Filarial nematode worm</name>
    <dbReference type="NCBI Taxonomy" id="6279"/>
    <lineage>
        <taxon>Eukaryota</taxon>
        <taxon>Metazoa</taxon>
        <taxon>Ecdysozoa</taxon>
        <taxon>Nematoda</taxon>
        <taxon>Chromadorea</taxon>
        <taxon>Rhabditida</taxon>
        <taxon>Spirurina</taxon>
        <taxon>Spiruromorpha</taxon>
        <taxon>Filarioidea</taxon>
        <taxon>Onchocercidae</taxon>
        <taxon>Brugia</taxon>
    </lineage>
</organism>
<accession>P29030</accession>
<feature type="signal peptide">
    <location>
        <begin position="1"/>
        <end position="22"/>
    </location>
</feature>
<feature type="chain" id="PRO_0000011947" description="Endochitinase">
    <location>
        <begin position="23"/>
        <end position="504"/>
    </location>
</feature>
<feature type="domain" description="GH18" evidence="2">
    <location>
        <begin position="23"/>
        <end position="392"/>
    </location>
</feature>
<feature type="repeat" description="1">
    <location>
        <begin position="407"/>
        <end position="420"/>
    </location>
</feature>
<feature type="repeat" description="2">
    <location>
        <begin position="421"/>
        <end position="434"/>
    </location>
</feature>
<feature type="repeat" description="3; approximate">
    <location>
        <begin position="435"/>
        <end position="448"/>
    </location>
</feature>
<feature type="domain" description="Chitin-binding type-2" evidence="1">
    <location>
        <begin position="448"/>
        <end position="504"/>
    </location>
</feature>
<feature type="region of interest" description="Disordered" evidence="3">
    <location>
        <begin position="389"/>
        <end position="450"/>
    </location>
</feature>
<feature type="region of interest" description="3 X 14 AA approximate tandem repeats of E-T-E-A-Y-[ED]-T-D-E-T-E-E-T-S">
    <location>
        <begin position="407"/>
        <end position="448"/>
    </location>
</feature>
<feature type="compositionally biased region" description="Low complexity" evidence="3">
    <location>
        <begin position="396"/>
        <end position="408"/>
    </location>
</feature>
<feature type="compositionally biased region" description="Acidic residues" evidence="3">
    <location>
        <begin position="409"/>
        <end position="435"/>
    </location>
</feature>
<feature type="active site" description="Proton donor" evidence="2">
    <location>
        <position position="148"/>
    </location>
</feature>
<feature type="binding site" evidence="2">
    <location>
        <begin position="78"/>
        <end position="79"/>
    </location>
    <ligand>
        <name>chitin</name>
        <dbReference type="ChEBI" id="CHEBI:17029"/>
    </ligand>
</feature>
<feature type="binding site" evidence="2">
    <location>
        <begin position="105"/>
        <end position="108"/>
    </location>
    <ligand>
        <name>chitin</name>
        <dbReference type="ChEBI" id="CHEBI:17029"/>
    </ligand>
</feature>
<feature type="binding site" evidence="2">
    <location>
        <position position="149"/>
    </location>
    <ligand>
        <name>chitin</name>
        <dbReference type="ChEBI" id="CHEBI:17029"/>
    </ligand>
</feature>
<feature type="binding site" evidence="2">
    <location>
        <begin position="212"/>
        <end position="215"/>
    </location>
    <ligand>
        <name>chitin</name>
        <dbReference type="ChEBI" id="CHEBI:17029"/>
    </ligand>
</feature>
<feature type="binding site" evidence="2">
    <location>
        <position position="362"/>
    </location>
    <ligand>
        <name>chitin</name>
        <dbReference type="ChEBI" id="CHEBI:17029"/>
    </ligand>
</feature>
<feature type="disulfide bond" evidence="2">
    <location>
        <begin position="27"/>
        <end position="52"/>
    </location>
</feature>
<feature type="disulfide bond" evidence="1">
    <location>
        <begin position="480"/>
        <end position="493"/>
    </location>
</feature>
<reference key="1">
    <citation type="journal article" date="1992" name="Proc. Natl. Acad. Sci. U.S.A.">
        <title>Transmission-blocking antibodies recognize microfilarial chitinase in brugian lymphatic filariasis.</title>
        <authorList>
            <person name="Fuhrman J.A."/>
            <person name="Lane W.S."/>
            <person name="Smith R.F."/>
            <person name="Piessens W.F."/>
            <person name="Perler F.B."/>
        </authorList>
    </citation>
    <scope>NUCLEOTIDE SEQUENCE [MRNA]</scope>
    <scope>PARTIAL PROTEIN SEQUENCE</scope>
</reference>
<dbReference type="EC" id="3.2.1.14"/>
<dbReference type="EMBL" id="M73689">
    <property type="protein sequence ID" value="AAA27854.1"/>
    <property type="molecule type" value="mRNA"/>
</dbReference>
<dbReference type="PIR" id="A38221">
    <property type="entry name" value="A38221"/>
</dbReference>
<dbReference type="SMR" id="P29030"/>
<dbReference type="FunCoup" id="P29030">
    <property type="interactions" value="35"/>
</dbReference>
<dbReference type="STRING" id="6279.P29030"/>
<dbReference type="ChEMBL" id="CHEMBL3562163"/>
<dbReference type="CAZy" id="CBM14">
    <property type="family name" value="Carbohydrate-Binding Module Family 14"/>
</dbReference>
<dbReference type="CAZy" id="GH18">
    <property type="family name" value="Glycoside Hydrolase Family 18"/>
</dbReference>
<dbReference type="HOGENOM" id="CLU_002833_3_1_1"/>
<dbReference type="InParanoid" id="P29030"/>
<dbReference type="OMA" id="GATRYWD"/>
<dbReference type="BRENDA" id="3.2.1.14">
    <property type="organism ID" value="997"/>
</dbReference>
<dbReference type="Proteomes" id="UP000006672">
    <property type="component" value="Unassembled WGS sequence"/>
</dbReference>
<dbReference type="GO" id="GO:0005576">
    <property type="term" value="C:extracellular region"/>
    <property type="evidence" value="ECO:0007669"/>
    <property type="project" value="InterPro"/>
</dbReference>
<dbReference type="GO" id="GO:0008061">
    <property type="term" value="F:chitin binding"/>
    <property type="evidence" value="ECO:0007669"/>
    <property type="project" value="UniProtKB-KW"/>
</dbReference>
<dbReference type="GO" id="GO:0008843">
    <property type="term" value="F:endochitinase activity"/>
    <property type="evidence" value="ECO:0007669"/>
    <property type="project" value="UniProtKB-EC"/>
</dbReference>
<dbReference type="GO" id="GO:0006032">
    <property type="term" value="P:chitin catabolic process"/>
    <property type="evidence" value="ECO:0007669"/>
    <property type="project" value="UniProtKB-KW"/>
</dbReference>
<dbReference type="GO" id="GO:0000272">
    <property type="term" value="P:polysaccharide catabolic process"/>
    <property type="evidence" value="ECO:0007669"/>
    <property type="project" value="UniProtKB-KW"/>
</dbReference>
<dbReference type="CDD" id="cd02872">
    <property type="entry name" value="GH18_chitolectin_chitotriosidase"/>
    <property type="match status" value="1"/>
</dbReference>
<dbReference type="Gene3D" id="3.10.50.10">
    <property type="match status" value="1"/>
</dbReference>
<dbReference type="Gene3D" id="2.170.140.10">
    <property type="entry name" value="Chitin binding domain"/>
    <property type="match status" value="1"/>
</dbReference>
<dbReference type="Gene3D" id="3.20.20.80">
    <property type="entry name" value="Glycosidases"/>
    <property type="match status" value="1"/>
</dbReference>
<dbReference type="InterPro" id="IPR002557">
    <property type="entry name" value="Chitin-bd_dom"/>
</dbReference>
<dbReference type="InterPro" id="IPR036508">
    <property type="entry name" value="Chitin-bd_dom_sf"/>
</dbReference>
<dbReference type="InterPro" id="IPR011583">
    <property type="entry name" value="Chitinase_II/V-like_cat"/>
</dbReference>
<dbReference type="InterPro" id="IPR029070">
    <property type="entry name" value="Chitinase_insertion_sf"/>
</dbReference>
<dbReference type="InterPro" id="IPR001223">
    <property type="entry name" value="Glyco_hydro18_cat"/>
</dbReference>
<dbReference type="InterPro" id="IPR001579">
    <property type="entry name" value="Glyco_hydro_18_chit_AS"/>
</dbReference>
<dbReference type="InterPro" id="IPR017853">
    <property type="entry name" value="Glycoside_hydrolase_SF"/>
</dbReference>
<dbReference type="InterPro" id="IPR050314">
    <property type="entry name" value="Glycosyl_Hydrlase_18"/>
</dbReference>
<dbReference type="PANTHER" id="PTHR11177">
    <property type="entry name" value="CHITINASE"/>
    <property type="match status" value="1"/>
</dbReference>
<dbReference type="PANTHER" id="PTHR11177:SF400">
    <property type="entry name" value="ENDOCHITINASE-RELATED"/>
    <property type="match status" value="1"/>
</dbReference>
<dbReference type="Pfam" id="PF01607">
    <property type="entry name" value="CBM_14"/>
    <property type="match status" value="1"/>
</dbReference>
<dbReference type="Pfam" id="PF00704">
    <property type="entry name" value="Glyco_hydro_18"/>
    <property type="match status" value="1"/>
</dbReference>
<dbReference type="SMART" id="SM00494">
    <property type="entry name" value="ChtBD2"/>
    <property type="match status" value="1"/>
</dbReference>
<dbReference type="SMART" id="SM00636">
    <property type="entry name" value="Glyco_18"/>
    <property type="match status" value="1"/>
</dbReference>
<dbReference type="SUPFAM" id="SSF51445">
    <property type="entry name" value="(Trans)glycosidases"/>
    <property type="match status" value="1"/>
</dbReference>
<dbReference type="SUPFAM" id="SSF54556">
    <property type="entry name" value="Chitinase insertion domain"/>
    <property type="match status" value="1"/>
</dbReference>
<dbReference type="SUPFAM" id="SSF57625">
    <property type="entry name" value="Invertebrate chitin-binding proteins"/>
    <property type="match status" value="1"/>
</dbReference>
<dbReference type="PROSITE" id="PS50940">
    <property type="entry name" value="CHIT_BIND_II"/>
    <property type="match status" value="1"/>
</dbReference>
<dbReference type="PROSITE" id="PS01095">
    <property type="entry name" value="GH18_1"/>
    <property type="match status" value="1"/>
</dbReference>
<dbReference type="PROSITE" id="PS51910">
    <property type="entry name" value="GH18_2"/>
    <property type="match status" value="1"/>
</dbReference>
<proteinExistence type="evidence at protein level"/>
<sequence>MNRTTLILFFIILSNTITVIHGYVRGCYYTNWAQYRDGEGKFLPGNIPNGLCTHILYAFAKVDELGDSKPFEWNDEDTEWSKGMYSAVTKLRETNPGLKVLLSYGGYNFGSAIFTGIAKSAQKTERFIKSAIAFLRKNNFDGFDLDWEYPVGVAEEHAKLVEAMKTAFVEEAKTSGKQRLLLTAAVSAGKGTIDGSYNVESLGKNFDLLFLMSYDLHGSWEKNVDLHGKLHPTKGEVSGIGIFNTEFAADYWASKGMPKEKIIIGIPMYAQGWTLDNPSETAIGAAASRPSSASKTNPAGGTASYWEICKYLKEGGKETVHQEGVGAYMVKGDQWYGYDNEETIRIKMKWLKEKGYGGAFIWALDFDDFTGKSCGKGPYPLLNAISSELEGESENPEITTEEPSITETEAYETDETEETSETEAYDTDETEETSETEATTYDTDETEGQECPERDGLFPHPTDCHLFIQCANNIAYVMQCPATTFFNDAIKVCDHMTNAPDTCI</sequence>
<keyword id="KW-0106">Calcium</keyword>
<keyword id="KW-0119">Carbohydrate metabolism</keyword>
<keyword id="KW-0146">Chitin degradation</keyword>
<keyword id="KW-0147">Chitin-binding</keyword>
<keyword id="KW-0903">Direct protein sequencing</keyword>
<keyword id="KW-1015">Disulfide bond</keyword>
<keyword id="KW-0325">Glycoprotein</keyword>
<keyword id="KW-0326">Glycosidase</keyword>
<keyword id="KW-0378">Hydrolase</keyword>
<keyword id="KW-0624">Polysaccharide degradation</keyword>
<keyword id="KW-1185">Reference proteome</keyword>
<keyword id="KW-0677">Repeat</keyword>
<keyword id="KW-0732">Signal</keyword>
<evidence type="ECO:0000255" key="1">
    <source>
        <dbReference type="PROSITE-ProRule" id="PRU00144"/>
    </source>
</evidence>
<evidence type="ECO:0000255" key="2">
    <source>
        <dbReference type="PROSITE-ProRule" id="PRU01258"/>
    </source>
</evidence>
<evidence type="ECO:0000256" key="3">
    <source>
        <dbReference type="SAM" id="MobiDB-lite"/>
    </source>
</evidence>
<evidence type="ECO:0000305" key="4"/>
<name>CHIT_BRUMA</name>
<protein>
    <recommendedName>
        <fullName>Endochitinase</fullName>
        <ecNumber>3.2.1.14</ecNumber>
    </recommendedName>
    <alternativeName>
        <fullName>MF1 antigen</fullName>
    </alternativeName>
</protein>
<comment type="function">
    <text>Microfilarial chitinase, which may function to degrade chitin-containing structures in the micro-filaria or in its mosquito vector during parasite development and transmission.</text>
</comment>
<comment type="catalytic activity">
    <reaction>
        <text>Random endo-hydrolysis of N-acetyl-beta-D-glucosaminide (1-&gt;4)-beta-linkages in chitin and chitodextrins.</text>
        <dbReference type="EC" id="3.2.1.14"/>
    </reaction>
</comment>
<comment type="developmental stage">
    <text>The appearance of the MF1 antigen correspond with the onset of the parasite's ability to infect the mosquito.</text>
</comment>
<comment type="PTM">
    <text>O-glycosylated.</text>
</comment>
<comment type="miscellaneous">
    <text>Known to bind calcium.</text>
</comment>
<comment type="similarity">
    <text evidence="4">Belongs to the glycosyl hydrolase 18 family. Chitinase class II subfamily.</text>
</comment>